<gene>
    <name type="primary">MT-CYB</name>
    <name type="synonym">COB</name>
    <name type="synonym">CYTB</name>
    <name type="synonym">MTCYB</name>
</gene>
<protein>
    <recommendedName>
        <fullName>Cytochrome b</fullName>
    </recommendedName>
    <alternativeName>
        <fullName>Complex III subunit 3</fullName>
    </alternativeName>
    <alternativeName>
        <fullName>Complex III subunit III</fullName>
    </alternativeName>
    <alternativeName>
        <fullName>Cytochrome b-c1 complex subunit 3</fullName>
    </alternativeName>
    <alternativeName>
        <fullName>Ubiquinol-cytochrome-c reductase complex cytochrome b subunit</fullName>
    </alternativeName>
</protein>
<reference key="1">
    <citation type="journal article" date="1999" name="J. Mammal. Evol.">
        <title>MtDNA evidence for repeated pulses of speciation within arvicoline and murid rodents.</title>
        <authorList>
            <person name="Conroy C.J."/>
            <person name="Cook J.A."/>
        </authorList>
    </citation>
    <scope>NUCLEOTIDE SEQUENCE [GENOMIC DNA]</scope>
</reference>
<dbReference type="EMBL" id="AF119278">
    <property type="protein sequence ID" value="AAD43896.1"/>
    <property type="molecule type" value="Genomic_DNA"/>
</dbReference>
<dbReference type="SMR" id="Q9XK70"/>
<dbReference type="GO" id="GO:0005743">
    <property type="term" value="C:mitochondrial inner membrane"/>
    <property type="evidence" value="ECO:0007669"/>
    <property type="project" value="UniProtKB-SubCell"/>
</dbReference>
<dbReference type="GO" id="GO:0045275">
    <property type="term" value="C:respiratory chain complex III"/>
    <property type="evidence" value="ECO:0007669"/>
    <property type="project" value="InterPro"/>
</dbReference>
<dbReference type="GO" id="GO:0046872">
    <property type="term" value="F:metal ion binding"/>
    <property type="evidence" value="ECO:0007669"/>
    <property type="project" value="UniProtKB-KW"/>
</dbReference>
<dbReference type="GO" id="GO:0008121">
    <property type="term" value="F:ubiquinol-cytochrome-c reductase activity"/>
    <property type="evidence" value="ECO:0007669"/>
    <property type="project" value="InterPro"/>
</dbReference>
<dbReference type="GO" id="GO:0006122">
    <property type="term" value="P:mitochondrial electron transport, ubiquinol to cytochrome c"/>
    <property type="evidence" value="ECO:0007669"/>
    <property type="project" value="TreeGrafter"/>
</dbReference>
<dbReference type="CDD" id="cd00290">
    <property type="entry name" value="cytochrome_b_C"/>
    <property type="match status" value="1"/>
</dbReference>
<dbReference type="CDD" id="cd00284">
    <property type="entry name" value="Cytochrome_b_N"/>
    <property type="match status" value="1"/>
</dbReference>
<dbReference type="FunFam" id="1.20.810.10:FF:000002">
    <property type="entry name" value="Cytochrome b"/>
    <property type="match status" value="1"/>
</dbReference>
<dbReference type="Gene3D" id="1.20.810.10">
    <property type="entry name" value="Cytochrome Bc1 Complex, Chain C"/>
    <property type="match status" value="1"/>
</dbReference>
<dbReference type="InterPro" id="IPR005798">
    <property type="entry name" value="Cyt_b/b6_C"/>
</dbReference>
<dbReference type="InterPro" id="IPR036150">
    <property type="entry name" value="Cyt_b/b6_C_sf"/>
</dbReference>
<dbReference type="InterPro" id="IPR005797">
    <property type="entry name" value="Cyt_b/b6_N"/>
</dbReference>
<dbReference type="InterPro" id="IPR027387">
    <property type="entry name" value="Cytb/b6-like_sf"/>
</dbReference>
<dbReference type="InterPro" id="IPR030689">
    <property type="entry name" value="Cytochrome_b"/>
</dbReference>
<dbReference type="InterPro" id="IPR048260">
    <property type="entry name" value="Cytochrome_b_C_euk/bac"/>
</dbReference>
<dbReference type="InterPro" id="IPR048259">
    <property type="entry name" value="Cytochrome_b_N_euk/bac"/>
</dbReference>
<dbReference type="InterPro" id="IPR016174">
    <property type="entry name" value="Di-haem_cyt_TM"/>
</dbReference>
<dbReference type="PANTHER" id="PTHR19271">
    <property type="entry name" value="CYTOCHROME B"/>
    <property type="match status" value="1"/>
</dbReference>
<dbReference type="PANTHER" id="PTHR19271:SF16">
    <property type="entry name" value="CYTOCHROME B"/>
    <property type="match status" value="1"/>
</dbReference>
<dbReference type="Pfam" id="PF00032">
    <property type="entry name" value="Cytochrom_B_C"/>
    <property type="match status" value="1"/>
</dbReference>
<dbReference type="Pfam" id="PF00033">
    <property type="entry name" value="Cytochrome_B"/>
    <property type="match status" value="1"/>
</dbReference>
<dbReference type="PIRSF" id="PIRSF038885">
    <property type="entry name" value="COB"/>
    <property type="match status" value="1"/>
</dbReference>
<dbReference type="SUPFAM" id="SSF81648">
    <property type="entry name" value="a domain/subunit of cytochrome bc1 complex (Ubiquinol-cytochrome c reductase)"/>
    <property type="match status" value="1"/>
</dbReference>
<dbReference type="SUPFAM" id="SSF81342">
    <property type="entry name" value="Transmembrane di-heme cytochromes"/>
    <property type="match status" value="1"/>
</dbReference>
<dbReference type="PROSITE" id="PS51003">
    <property type="entry name" value="CYTB_CTER"/>
    <property type="match status" value="1"/>
</dbReference>
<dbReference type="PROSITE" id="PS51002">
    <property type="entry name" value="CYTB_NTER"/>
    <property type="match status" value="1"/>
</dbReference>
<organism>
    <name type="scientific">Phodopus campbelli</name>
    <name type="common">Campbell's dwarf Russian hamster</name>
    <dbReference type="NCBI Taxonomy" id="47665"/>
    <lineage>
        <taxon>Eukaryota</taxon>
        <taxon>Metazoa</taxon>
        <taxon>Chordata</taxon>
        <taxon>Craniata</taxon>
        <taxon>Vertebrata</taxon>
        <taxon>Euteleostomi</taxon>
        <taxon>Mammalia</taxon>
        <taxon>Eutheria</taxon>
        <taxon>Euarchontoglires</taxon>
        <taxon>Glires</taxon>
        <taxon>Rodentia</taxon>
        <taxon>Myomorpha</taxon>
        <taxon>Muroidea</taxon>
        <taxon>Cricetidae</taxon>
        <taxon>Cricetinae</taxon>
        <taxon>Phodopus</taxon>
    </lineage>
</organism>
<geneLocation type="mitochondrion"/>
<feature type="chain" id="PRO_0000254965" description="Cytochrome b">
    <location>
        <begin position="1"/>
        <end position="380"/>
    </location>
</feature>
<feature type="transmembrane region" description="Helical" evidence="2">
    <location>
        <begin position="33"/>
        <end position="53"/>
    </location>
</feature>
<feature type="transmembrane region" description="Helical" evidence="2">
    <location>
        <begin position="77"/>
        <end position="98"/>
    </location>
</feature>
<feature type="transmembrane region" description="Helical" evidence="2">
    <location>
        <begin position="113"/>
        <end position="133"/>
    </location>
</feature>
<feature type="transmembrane region" description="Helical" evidence="2">
    <location>
        <begin position="178"/>
        <end position="198"/>
    </location>
</feature>
<feature type="transmembrane region" description="Helical" evidence="2">
    <location>
        <begin position="226"/>
        <end position="246"/>
    </location>
</feature>
<feature type="transmembrane region" description="Helical" evidence="2">
    <location>
        <begin position="288"/>
        <end position="308"/>
    </location>
</feature>
<feature type="transmembrane region" description="Helical" evidence="2">
    <location>
        <begin position="320"/>
        <end position="340"/>
    </location>
</feature>
<feature type="transmembrane region" description="Helical" evidence="2">
    <location>
        <begin position="347"/>
        <end position="367"/>
    </location>
</feature>
<feature type="binding site" description="axial binding residue" evidence="2">
    <location>
        <position position="83"/>
    </location>
    <ligand>
        <name>heme b</name>
        <dbReference type="ChEBI" id="CHEBI:60344"/>
        <label>b562</label>
    </ligand>
    <ligandPart>
        <name>Fe</name>
        <dbReference type="ChEBI" id="CHEBI:18248"/>
    </ligandPart>
</feature>
<feature type="binding site" description="axial binding residue" evidence="2">
    <location>
        <position position="97"/>
    </location>
    <ligand>
        <name>heme b</name>
        <dbReference type="ChEBI" id="CHEBI:60344"/>
        <label>b566</label>
    </ligand>
    <ligandPart>
        <name>Fe</name>
        <dbReference type="ChEBI" id="CHEBI:18248"/>
    </ligandPart>
</feature>
<feature type="binding site" description="axial binding residue" evidence="2">
    <location>
        <position position="182"/>
    </location>
    <ligand>
        <name>heme b</name>
        <dbReference type="ChEBI" id="CHEBI:60344"/>
        <label>b562</label>
    </ligand>
    <ligandPart>
        <name>Fe</name>
        <dbReference type="ChEBI" id="CHEBI:18248"/>
    </ligandPart>
</feature>
<feature type="binding site" description="axial binding residue" evidence="2">
    <location>
        <position position="196"/>
    </location>
    <ligand>
        <name>heme b</name>
        <dbReference type="ChEBI" id="CHEBI:60344"/>
        <label>b566</label>
    </ligand>
    <ligandPart>
        <name>Fe</name>
        <dbReference type="ChEBI" id="CHEBI:18248"/>
    </ligandPart>
</feature>
<feature type="binding site" evidence="2">
    <location>
        <position position="201"/>
    </location>
    <ligand>
        <name>a ubiquinone</name>
        <dbReference type="ChEBI" id="CHEBI:16389"/>
    </ligand>
</feature>
<keyword id="KW-0249">Electron transport</keyword>
<keyword id="KW-0349">Heme</keyword>
<keyword id="KW-0408">Iron</keyword>
<keyword id="KW-0472">Membrane</keyword>
<keyword id="KW-0479">Metal-binding</keyword>
<keyword id="KW-0496">Mitochondrion</keyword>
<keyword id="KW-0999">Mitochondrion inner membrane</keyword>
<keyword id="KW-0679">Respiratory chain</keyword>
<keyword id="KW-0812">Transmembrane</keyword>
<keyword id="KW-1133">Transmembrane helix</keyword>
<keyword id="KW-0813">Transport</keyword>
<keyword id="KW-0830">Ubiquinone</keyword>
<proteinExistence type="inferred from homology"/>
<accession>Q9XK70</accession>
<evidence type="ECO:0000250" key="1"/>
<evidence type="ECO:0000250" key="2">
    <source>
        <dbReference type="UniProtKB" id="P00157"/>
    </source>
</evidence>
<evidence type="ECO:0000255" key="3">
    <source>
        <dbReference type="PROSITE-ProRule" id="PRU00967"/>
    </source>
</evidence>
<evidence type="ECO:0000255" key="4">
    <source>
        <dbReference type="PROSITE-ProRule" id="PRU00968"/>
    </source>
</evidence>
<sequence length="380" mass="42957">MTNMRKNHPLMKIVNHAFIDLPAPSNISSWWNFGSLIGLCLIMQILTGLFLAMHYTSDTTTAFSSVTHICRDVNYGWLIRYLHANGASMFFICLFLHVGRGIYYGSYTMVETWNIGVVLLLTVMATAFMGYVLPWGQMSFWGATVITNLLSAIPYIGTTLVEWIWGGFSVDKATLTRFFAFHFILPFIITALVMVHLLFLHETGSNNPSGLNSDADKIPFHPYYTVKDLLGVFLLLVTLMILVLFFPDILGDPDNYTPANPLNTPAHIKPEWYFLFAYAILRSIPNKLGGVLALILSILILSILPLLHTSKHRAMTFRPLTQFMYWLLVADLLVLTWIGGQPVEYPFIIIGQLASIMYFATIVIFMPIASMIEDNMLKFT</sequence>
<comment type="function">
    <text evidence="2">Component of the ubiquinol-cytochrome c reductase complex (complex III or cytochrome b-c1 complex) that is part of the mitochondrial respiratory chain. The b-c1 complex mediates electron transfer from ubiquinol to cytochrome c. Contributes to the generation of a proton gradient across the mitochondrial membrane that is then used for ATP synthesis.</text>
</comment>
<comment type="cofactor">
    <cofactor evidence="2">
        <name>heme b</name>
        <dbReference type="ChEBI" id="CHEBI:60344"/>
    </cofactor>
    <text evidence="2">Binds 2 heme b groups non-covalently.</text>
</comment>
<comment type="subunit">
    <text evidence="2">The cytochrome bc1 complex contains 11 subunits: 3 respiratory subunits (MT-CYB, CYC1 and UQCRFS1), 2 core proteins (UQCRC1 and UQCRC2) and 6 low-molecular weight proteins (UQCRH/QCR6, UQCRB/QCR7, UQCRQ/QCR8, UQCR10/QCR9, UQCR11/QCR10 and a cleavage product of UQCRFS1). This cytochrome bc1 complex then forms a dimer.</text>
</comment>
<comment type="subcellular location">
    <subcellularLocation>
        <location evidence="2">Mitochondrion inner membrane</location>
        <topology evidence="2">Multi-pass membrane protein</topology>
    </subcellularLocation>
</comment>
<comment type="miscellaneous">
    <text evidence="1">Heme 1 (or BL or b562) is low-potential and absorbs at about 562 nm, and heme 2 (or BH or b566) is high-potential and absorbs at about 566 nm.</text>
</comment>
<comment type="similarity">
    <text evidence="3 4">Belongs to the cytochrome b family.</text>
</comment>
<comment type="caution">
    <text evidence="2">The full-length protein contains only eight transmembrane helices, not nine as predicted by bioinformatics tools.</text>
</comment>
<name>CYB_PHOCM</name>